<keyword id="KW-0997">Cell inner membrane</keyword>
<keyword id="KW-1003">Cell membrane</keyword>
<keyword id="KW-0169">Cobalamin biosynthesis</keyword>
<keyword id="KW-0460">Magnesium</keyword>
<keyword id="KW-0472">Membrane</keyword>
<keyword id="KW-0808">Transferase</keyword>
<keyword id="KW-0812">Transmembrane</keyword>
<keyword id="KW-1133">Transmembrane helix</keyword>
<dbReference type="EC" id="2.7.8.26" evidence="1"/>
<dbReference type="EMBL" id="CP000647">
    <property type="protein sequence ID" value="ABR77882.1"/>
    <property type="molecule type" value="Genomic_DNA"/>
</dbReference>
<dbReference type="RefSeq" id="WP_015958682.1">
    <property type="nucleotide sequence ID" value="NC_009648.1"/>
</dbReference>
<dbReference type="STRING" id="272620.KPN_02464"/>
<dbReference type="PaxDb" id="272620-KPN_02464"/>
<dbReference type="EnsemblBacteria" id="ABR77882">
    <property type="protein sequence ID" value="ABR77882"/>
    <property type="gene ID" value="KPN_02464"/>
</dbReference>
<dbReference type="KEGG" id="kpn:KPN_02464"/>
<dbReference type="HOGENOM" id="CLU_057426_1_1_6"/>
<dbReference type="UniPathway" id="UPA00148">
    <property type="reaction ID" value="UER00238"/>
</dbReference>
<dbReference type="Proteomes" id="UP000000265">
    <property type="component" value="Chromosome"/>
</dbReference>
<dbReference type="GO" id="GO:0005886">
    <property type="term" value="C:plasma membrane"/>
    <property type="evidence" value="ECO:0007669"/>
    <property type="project" value="UniProtKB-SubCell"/>
</dbReference>
<dbReference type="GO" id="GO:0051073">
    <property type="term" value="F:adenosylcobinamide-GDP ribazoletransferase activity"/>
    <property type="evidence" value="ECO:0007669"/>
    <property type="project" value="UniProtKB-UniRule"/>
</dbReference>
<dbReference type="GO" id="GO:0008818">
    <property type="term" value="F:cobalamin 5'-phosphate synthase activity"/>
    <property type="evidence" value="ECO:0007669"/>
    <property type="project" value="UniProtKB-UniRule"/>
</dbReference>
<dbReference type="GO" id="GO:0009236">
    <property type="term" value="P:cobalamin biosynthetic process"/>
    <property type="evidence" value="ECO:0007669"/>
    <property type="project" value="UniProtKB-UniRule"/>
</dbReference>
<dbReference type="HAMAP" id="MF_00719">
    <property type="entry name" value="CobS"/>
    <property type="match status" value="1"/>
</dbReference>
<dbReference type="InterPro" id="IPR003805">
    <property type="entry name" value="CobS"/>
</dbReference>
<dbReference type="NCBIfam" id="TIGR00317">
    <property type="entry name" value="cobS"/>
    <property type="match status" value="1"/>
</dbReference>
<dbReference type="PANTHER" id="PTHR34148">
    <property type="entry name" value="ADENOSYLCOBINAMIDE-GDP RIBAZOLETRANSFERASE"/>
    <property type="match status" value="1"/>
</dbReference>
<dbReference type="PANTHER" id="PTHR34148:SF1">
    <property type="entry name" value="ADENOSYLCOBINAMIDE-GDP RIBAZOLETRANSFERASE"/>
    <property type="match status" value="1"/>
</dbReference>
<dbReference type="Pfam" id="PF02654">
    <property type="entry name" value="CobS"/>
    <property type="match status" value="1"/>
</dbReference>
<reference key="1">
    <citation type="submission" date="2006-09" db="EMBL/GenBank/DDBJ databases">
        <authorList>
            <consortium name="The Klebsiella pneumonia Genome Sequencing Project"/>
            <person name="McClelland M."/>
            <person name="Sanderson E.K."/>
            <person name="Spieth J."/>
            <person name="Clifton W.S."/>
            <person name="Latreille P."/>
            <person name="Sabo A."/>
            <person name="Pepin K."/>
            <person name="Bhonagiri V."/>
            <person name="Porwollik S."/>
            <person name="Ali J."/>
            <person name="Wilson R.K."/>
        </authorList>
    </citation>
    <scope>NUCLEOTIDE SEQUENCE [LARGE SCALE GENOMIC DNA]</scope>
    <source>
        <strain>ATCC 700721 / MGH 78578</strain>
    </source>
</reference>
<sequence length="246" mass="26033">MIKSFFAALSFISRLPVPARLSQGLEIEQYQRSIVTFPLVGLLLGAIAGAVALLLQPWCGVPLAALFGVLALALLTGGFHLDGLADTCDGIFSARTRDRMLEIMRDSRLGTHGGLALIFVLVAKVLVVGELLLRDIHPIAALAAACAVGRGMAALLMYRHRYAREKGLGNLFIGKISLQQTLVTMAMAIALATALLGLQGLRAALITLVLIWGLGWALKRTLGGQTGDTLGAAIELGELLFLLALL</sequence>
<accession>A6TBB1</accession>
<evidence type="ECO:0000255" key="1">
    <source>
        <dbReference type="HAMAP-Rule" id="MF_00719"/>
    </source>
</evidence>
<protein>
    <recommendedName>
        <fullName evidence="1">Adenosylcobinamide-GDP ribazoletransferase</fullName>
        <ecNumber evidence="1">2.7.8.26</ecNumber>
    </recommendedName>
    <alternativeName>
        <fullName evidence="1">Cobalamin synthase</fullName>
    </alternativeName>
    <alternativeName>
        <fullName evidence="1">Cobalamin-5'-phosphate synthase</fullName>
    </alternativeName>
</protein>
<proteinExistence type="inferred from homology"/>
<name>COBS_KLEP7</name>
<gene>
    <name evidence="1" type="primary">cobS</name>
    <name type="ordered locus">KPN78578_24210</name>
    <name type="ORF">KPN_02464</name>
</gene>
<organism>
    <name type="scientific">Klebsiella pneumoniae subsp. pneumoniae (strain ATCC 700721 / MGH 78578)</name>
    <dbReference type="NCBI Taxonomy" id="272620"/>
    <lineage>
        <taxon>Bacteria</taxon>
        <taxon>Pseudomonadati</taxon>
        <taxon>Pseudomonadota</taxon>
        <taxon>Gammaproteobacteria</taxon>
        <taxon>Enterobacterales</taxon>
        <taxon>Enterobacteriaceae</taxon>
        <taxon>Klebsiella/Raoultella group</taxon>
        <taxon>Klebsiella</taxon>
        <taxon>Klebsiella pneumoniae complex</taxon>
    </lineage>
</organism>
<feature type="chain" id="PRO_1000045772" description="Adenosylcobinamide-GDP ribazoletransferase">
    <location>
        <begin position="1"/>
        <end position="246"/>
    </location>
</feature>
<feature type="transmembrane region" description="Helical" evidence="1">
    <location>
        <begin position="34"/>
        <end position="54"/>
    </location>
</feature>
<feature type="transmembrane region" description="Helical" evidence="1">
    <location>
        <begin position="59"/>
        <end position="79"/>
    </location>
</feature>
<feature type="transmembrane region" description="Helical" evidence="1">
    <location>
        <begin position="113"/>
        <end position="133"/>
    </location>
</feature>
<feature type="transmembrane region" description="Helical" evidence="1">
    <location>
        <begin position="136"/>
        <end position="156"/>
    </location>
</feature>
<feature type="transmembrane region" description="Helical" evidence="1">
    <location>
        <begin position="181"/>
        <end position="201"/>
    </location>
</feature>
<feature type="transmembrane region" description="Helical" evidence="1">
    <location>
        <begin position="203"/>
        <end position="223"/>
    </location>
</feature>
<comment type="function">
    <text evidence="1">Joins adenosylcobinamide-GDP and alpha-ribazole to generate adenosylcobalamin (Ado-cobalamin). Also synthesizes adenosylcobalamin 5'-phosphate from adenosylcobinamide-GDP and alpha-ribazole 5'-phosphate.</text>
</comment>
<comment type="catalytic activity">
    <reaction evidence="1">
        <text>alpha-ribazole + adenosylcob(III)inamide-GDP = adenosylcob(III)alamin + GMP + H(+)</text>
        <dbReference type="Rhea" id="RHEA:16049"/>
        <dbReference type="ChEBI" id="CHEBI:10329"/>
        <dbReference type="ChEBI" id="CHEBI:15378"/>
        <dbReference type="ChEBI" id="CHEBI:18408"/>
        <dbReference type="ChEBI" id="CHEBI:58115"/>
        <dbReference type="ChEBI" id="CHEBI:60487"/>
        <dbReference type="EC" id="2.7.8.26"/>
    </reaction>
</comment>
<comment type="catalytic activity">
    <reaction evidence="1">
        <text>alpha-ribazole 5'-phosphate + adenosylcob(III)inamide-GDP = adenosylcob(III)alamin 5'-phosphate + GMP + H(+)</text>
        <dbReference type="Rhea" id="RHEA:23560"/>
        <dbReference type="ChEBI" id="CHEBI:15378"/>
        <dbReference type="ChEBI" id="CHEBI:57918"/>
        <dbReference type="ChEBI" id="CHEBI:58115"/>
        <dbReference type="ChEBI" id="CHEBI:60487"/>
        <dbReference type="ChEBI" id="CHEBI:60493"/>
        <dbReference type="EC" id="2.7.8.26"/>
    </reaction>
</comment>
<comment type="cofactor">
    <cofactor evidence="1">
        <name>Mg(2+)</name>
        <dbReference type="ChEBI" id="CHEBI:18420"/>
    </cofactor>
</comment>
<comment type="pathway">
    <text evidence="1">Cofactor biosynthesis; adenosylcobalamin biosynthesis; adenosylcobalamin from cob(II)yrinate a,c-diamide: step 7/7.</text>
</comment>
<comment type="subcellular location">
    <subcellularLocation>
        <location evidence="1">Cell inner membrane</location>
        <topology evidence="1">Multi-pass membrane protein</topology>
    </subcellularLocation>
</comment>
<comment type="similarity">
    <text evidence="1">Belongs to the CobS family.</text>
</comment>